<protein>
    <recommendedName>
        <fullName evidence="1">Proton extrusion protein PxcA</fullName>
    </recommendedName>
</protein>
<keyword id="KW-0997">Cell inner membrane</keyword>
<keyword id="KW-1003">Cell membrane</keyword>
<keyword id="KW-0375">Hydrogen ion transport</keyword>
<keyword id="KW-0406">Ion transport</keyword>
<keyword id="KW-0472">Membrane</keyword>
<keyword id="KW-0812">Transmembrane</keyword>
<keyword id="KW-1133">Transmembrane helix</keyword>
<keyword id="KW-0813">Transport</keyword>
<organism>
    <name type="scientific">Prochlorococcus marinus (strain MIT 9303)</name>
    <dbReference type="NCBI Taxonomy" id="59922"/>
    <lineage>
        <taxon>Bacteria</taxon>
        <taxon>Bacillati</taxon>
        <taxon>Cyanobacteriota</taxon>
        <taxon>Cyanophyceae</taxon>
        <taxon>Synechococcales</taxon>
        <taxon>Prochlorococcaceae</taxon>
        <taxon>Prochlorococcus</taxon>
    </lineage>
</organism>
<gene>
    <name evidence="1" type="primary">pxcA</name>
    <name type="ordered locus">P9303_14691</name>
</gene>
<name>PXCA_PROM3</name>
<comment type="function">
    <text evidence="1">Required for H(+) efflux immediately after light irradiation to form a rapid H(+) concentration gradient across the thylakoid membranes. Together with PxcL, contributes to transient H(+) uptake following dark to light transition.</text>
</comment>
<comment type="subcellular location">
    <subcellularLocation>
        <location evidence="1">Cell inner membrane</location>
        <topology evidence="1">Multi-pass membrane protein</topology>
    </subcellularLocation>
</comment>
<comment type="similarity">
    <text evidence="1">Belongs to the CemA family.</text>
</comment>
<proteinExistence type="inferred from homology"/>
<reference key="1">
    <citation type="journal article" date="2007" name="PLoS Genet.">
        <title>Patterns and implications of gene gain and loss in the evolution of Prochlorococcus.</title>
        <authorList>
            <person name="Kettler G.C."/>
            <person name="Martiny A.C."/>
            <person name="Huang K."/>
            <person name="Zucker J."/>
            <person name="Coleman M.L."/>
            <person name="Rodrigue S."/>
            <person name="Chen F."/>
            <person name="Lapidus A."/>
            <person name="Ferriera S."/>
            <person name="Johnson J."/>
            <person name="Steglich C."/>
            <person name="Church G.M."/>
            <person name="Richardson P."/>
            <person name="Chisholm S.W."/>
        </authorList>
    </citation>
    <scope>NUCLEOTIDE SEQUENCE [LARGE SCALE GENOMIC DNA]</scope>
    <source>
        <strain>MIT 9303</strain>
    </source>
</reference>
<accession>A2C9Q5</accession>
<dbReference type="EMBL" id="CP000554">
    <property type="protein sequence ID" value="ABM78215.1"/>
    <property type="molecule type" value="Genomic_DNA"/>
</dbReference>
<dbReference type="SMR" id="A2C9Q5"/>
<dbReference type="STRING" id="59922.P9303_14691"/>
<dbReference type="KEGG" id="pmf:P9303_14691"/>
<dbReference type="HOGENOM" id="CLU_690401_0_0_3"/>
<dbReference type="Proteomes" id="UP000002274">
    <property type="component" value="Chromosome"/>
</dbReference>
<dbReference type="GO" id="GO:0005886">
    <property type="term" value="C:plasma membrane"/>
    <property type="evidence" value="ECO:0007669"/>
    <property type="project" value="UniProtKB-SubCell"/>
</dbReference>
<dbReference type="GO" id="GO:0015078">
    <property type="term" value="F:proton transmembrane transporter activity"/>
    <property type="evidence" value="ECO:0007669"/>
    <property type="project" value="UniProtKB-UniRule"/>
</dbReference>
<dbReference type="HAMAP" id="MF_01308">
    <property type="entry name" value="CemA_PxcA"/>
    <property type="match status" value="1"/>
</dbReference>
<dbReference type="InterPro" id="IPR004282">
    <property type="entry name" value="CemA"/>
</dbReference>
<dbReference type="NCBIfam" id="NF002705">
    <property type="entry name" value="PRK02507.1-4"/>
    <property type="match status" value="1"/>
</dbReference>
<dbReference type="PANTHER" id="PTHR33650:SF2">
    <property type="entry name" value="CHLOROPLAST ENVELOPE MEMBRANE PROTEIN"/>
    <property type="match status" value="1"/>
</dbReference>
<dbReference type="PANTHER" id="PTHR33650">
    <property type="entry name" value="CHLOROPLAST ENVELOPE MEMBRANE PROTEIN-RELATED"/>
    <property type="match status" value="1"/>
</dbReference>
<dbReference type="Pfam" id="PF03040">
    <property type="entry name" value="CemA"/>
    <property type="match status" value="1"/>
</dbReference>
<evidence type="ECO:0000255" key="1">
    <source>
        <dbReference type="HAMAP-Rule" id="MF_01308"/>
    </source>
</evidence>
<feature type="chain" id="PRO_0000293496" description="Proton extrusion protein PxcA">
    <location>
        <begin position="1"/>
        <end position="376"/>
    </location>
</feature>
<feature type="transmembrane region" description="Helical" evidence="1">
    <location>
        <begin position="150"/>
        <end position="170"/>
    </location>
</feature>
<feature type="transmembrane region" description="Helical" evidence="1">
    <location>
        <begin position="251"/>
        <end position="271"/>
    </location>
</feature>
<feature type="transmembrane region" description="Helical" evidence="1">
    <location>
        <begin position="299"/>
        <end position="319"/>
    </location>
</feature>
<feature type="transmembrane region" description="Helical" evidence="1">
    <location>
        <begin position="334"/>
        <end position="354"/>
    </location>
</feature>
<sequence>MRTFGEARSIDINNDLERGYEAALLIQTLELEYYGDRPIRPNLQLSVPRSLQSTILRKFHTAVNICRLTFEAIKPNISQLDSQEYRKFQLIETIVNRYAPKRSSRSTSMSRAPDPLPRSLLGLVDKVRRQLDPTSEATLVAGFRRRRDSTLISLKIILLLILVPLLVQQMSRTYLITPAIDYLAPDLPFLSYPKPQLEEQAVEKLRVFKAEIEFDALLKGDSIPSQDELQKALVIKANQLKDEADKESTHAVKNVLADIAALIAFAFVCIINREELRVLRGFLDEAVYGLSDSAKAFAIILFTDMFVGFHSPEGWQVLLQGIANHFGFPARENFILLFIATFPVILATIFKYWIFRYLNRVSPSSVATLRGMNGSS</sequence>